<name>ATPG_PROMP</name>
<proteinExistence type="inferred from homology"/>
<protein>
    <recommendedName>
        <fullName evidence="1">ATP synthase gamma chain</fullName>
    </recommendedName>
    <alternativeName>
        <fullName evidence="1">ATP synthase F1 sector gamma subunit</fullName>
    </alternativeName>
    <alternativeName>
        <fullName evidence="1">F-ATPase gamma subunit</fullName>
    </alternativeName>
</protein>
<comment type="function">
    <text evidence="1">Produces ATP from ADP in the presence of a proton gradient across the membrane. The gamma chain is believed to be important in regulating ATPase activity and the flow of protons through the CF(0) complex.</text>
</comment>
<comment type="subunit">
    <text evidence="1">F-type ATPases have 2 components, CF(1) - the catalytic core - and CF(0) - the membrane proton channel. CF(1) has five subunits: alpha(3), beta(3), gamma(1), delta(1), epsilon(1). CF(0) has three main subunits: a, b and c.</text>
</comment>
<comment type="subcellular location">
    <subcellularLocation>
        <location evidence="1">Cellular thylakoid membrane</location>
        <topology evidence="1">Peripheral membrane protein</topology>
    </subcellularLocation>
</comment>
<comment type="similarity">
    <text evidence="1">Belongs to the ATPase gamma chain family.</text>
</comment>
<dbReference type="EMBL" id="BX548174">
    <property type="protein sequence ID" value="CAE19909.1"/>
    <property type="molecule type" value="Genomic_DNA"/>
</dbReference>
<dbReference type="RefSeq" id="WP_011133079.1">
    <property type="nucleotide sequence ID" value="NC_005072.1"/>
</dbReference>
<dbReference type="SMR" id="Q7V038"/>
<dbReference type="STRING" id="59919.PMM1450"/>
<dbReference type="KEGG" id="pmm:PMM1450"/>
<dbReference type="eggNOG" id="COG0224">
    <property type="taxonomic scope" value="Bacteria"/>
</dbReference>
<dbReference type="HOGENOM" id="CLU_050669_0_0_3"/>
<dbReference type="OrthoDB" id="9812769at2"/>
<dbReference type="Proteomes" id="UP000001026">
    <property type="component" value="Chromosome"/>
</dbReference>
<dbReference type="GO" id="GO:0031676">
    <property type="term" value="C:plasma membrane-derived thylakoid membrane"/>
    <property type="evidence" value="ECO:0007669"/>
    <property type="project" value="UniProtKB-SubCell"/>
</dbReference>
<dbReference type="GO" id="GO:0045259">
    <property type="term" value="C:proton-transporting ATP synthase complex"/>
    <property type="evidence" value="ECO:0007669"/>
    <property type="project" value="UniProtKB-KW"/>
</dbReference>
<dbReference type="GO" id="GO:0005524">
    <property type="term" value="F:ATP binding"/>
    <property type="evidence" value="ECO:0007669"/>
    <property type="project" value="UniProtKB-UniRule"/>
</dbReference>
<dbReference type="GO" id="GO:0046933">
    <property type="term" value="F:proton-transporting ATP synthase activity, rotational mechanism"/>
    <property type="evidence" value="ECO:0007669"/>
    <property type="project" value="UniProtKB-UniRule"/>
</dbReference>
<dbReference type="CDD" id="cd12151">
    <property type="entry name" value="F1-ATPase_gamma"/>
    <property type="match status" value="1"/>
</dbReference>
<dbReference type="FunFam" id="3.40.1380.10:FF:000006">
    <property type="entry name" value="ATP synthase gamma chain"/>
    <property type="match status" value="1"/>
</dbReference>
<dbReference type="FunFam" id="1.10.287.80:FF:000003">
    <property type="entry name" value="ATP synthase gamma chain, chloroplastic"/>
    <property type="match status" value="1"/>
</dbReference>
<dbReference type="Gene3D" id="3.40.1380.10">
    <property type="match status" value="1"/>
</dbReference>
<dbReference type="Gene3D" id="1.10.287.80">
    <property type="entry name" value="ATP synthase, gamma subunit, helix hairpin domain"/>
    <property type="match status" value="2"/>
</dbReference>
<dbReference type="HAMAP" id="MF_00815">
    <property type="entry name" value="ATP_synth_gamma_bact"/>
    <property type="match status" value="1"/>
</dbReference>
<dbReference type="InterPro" id="IPR035968">
    <property type="entry name" value="ATP_synth_F1_ATPase_gsu"/>
</dbReference>
<dbReference type="InterPro" id="IPR000131">
    <property type="entry name" value="ATP_synth_F1_gsu"/>
</dbReference>
<dbReference type="NCBIfam" id="TIGR01146">
    <property type="entry name" value="ATPsyn_F1gamma"/>
    <property type="match status" value="1"/>
</dbReference>
<dbReference type="NCBIfam" id="NF004145">
    <property type="entry name" value="PRK05621.1-2"/>
    <property type="match status" value="1"/>
</dbReference>
<dbReference type="PANTHER" id="PTHR11693">
    <property type="entry name" value="ATP SYNTHASE GAMMA CHAIN"/>
    <property type="match status" value="1"/>
</dbReference>
<dbReference type="PANTHER" id="PTHR11693:SF41">
    <property type="entry name" value="ATP SYNTHASE GAMMA CHAIN, CHLOROPLASTIC"/>
    <property type="match status" value="1"/>
</dbReference>
<dbReference type="Pfam" id="PF00231">
    <property type="entry name" value="ATP-synt"/>
    <property type="match status" value="1"/>
</dbReference>
<dbReference type="PRINTS" id="PR00126">
    <property type="entry name" value="ATPASEGAMMA"/>
</dbReference>
<dbReference type="SUPFAM" id="SSF52943">
    <property type="entry name" value="ATP synthase (F1-ATPase), gamma subunit"/>
    <property type="match status" value="1"/>
</dbReference>
<sequence>MANLKEIRDRIVSVKNTRKITEAMRLVAAAKVRRAQDQVLKSRPFADKLARVLENIQSRVQFEAVDSPLLSKRNVKKISLVCITADRGLCGGYNTNIIKKVEIRYAELIKQGYEPNLILVGKKAIGYFQNRKDRYVIKSTFKELEQVPTAIDSEGITNDVLAEFLSENSDRVEIIYTKFITLVSCAPVVQTLLPLDPQGIAEDNDEIFRLTTKNSKLLVEKSNIEKNDSDKLPSDIVFEQSPDQLLDSLLPLYLQNQILRALQESAASELACRMTAMNNASDNAKELASTLNLTYNKARQAAITQEILEVVGGSAV</sequence>
<keyword id="KW-0066">ATP synthesis</keyword>
<keyword id="KW-0139">CF(1)</keyword>
<keyword id="KW-0375">Hydrogen ion transport</keyword>
<keyword id="KW-0406">Ion transport</keyword>
<keyword id="KW-0472">Membrane</keyword>
<keyword id="KW-0793">Thylakoid</keyword>
<keyword id="KW-0813">Transport</keyword>
<evidence type="ECO:0000255" key="1">
    <source>
        <dbReference type="HAMAP-Rule" id="MF_00815"/>
    </source>
</evidence>
<organism>
    <name type="scientific">Prochlorococcus marinus subsp. pastoris (strain CCMP1986 / NIES-2087 / MED4)</name>
    <dbReference type="NCBI Taxonomy" id="59919"/>
    <lineage>
        <taxon>Bacteria</taxon>
        <taxon>Bacillati</taxon>
        <taxon>Cyanobacteriota</taxon>
        <taxon>Cyanophyceae</taxon>
        <taxon>Synechococcales</taxon>
        <taxon>Prochlorococcaceae</taxon>
        <taxon>Prochlorococcus</taxon>
    </lineage>
</organism>
<gene>
    <name evidence="1" type="primary">atpG</name>
    <name evidence="1" type="synonym">atpC</name>
    <name type="ordered locus">PMM1450</name>
</gene>
<accession>Q7V038</accession>
<feature type="chain" id="PRO_0000073342" description="ATP synthase gamma chain">
    <location>
        <begin position="1"/>
        <end position="316"/>
    </location>
</feature>
<reference key="1">
    <citation type="journal article" date="2003" name="Nature">
        <title>Genome divergence in two Prochlorococcus ecotypes reflects oceanic niche differentiation.</title>
        <authorList>
            <person name="Rocap G."/>
            <person name="Larimer F.W."/>
            <person name="Lamerdin J.E."/>
            <person name="Malfatti S."/>
            <person name="Chain P."/>
            <person name="Ahlgren N.A."/>
            <person name="Arellano A."/>
            <person name="Coleman M."/>
            <person name="Hauser L."/>
            <person name="Hess W.R."/>
            <person name="Johnson Z.I."/>
            <person name="Land M.L."/>
            <person name="Lindell D."/>
            <person name="Post A.F."/>
            <person name="Regala W."/>
            <person name="Shah M."/>
            <person name="Shaw S.L."/>
            <person name="Steglich C."/>
            <person name="Sullivan M.B."/>
            <person name="Ting C.S."/>
            <person name="Tolonen A."/>
            <person name="Webb E.A."/>
            <person name="Zinser E.R."/>
            <person name="Chisholm S.W."/>
        </authorList>
    </citation>
    <scope>NUCLEOTIDE SEQUENCE [LARGE SCALE GENOMIC DNA]</scope>
    <source>
        <strain>CCMP1986 / NIES-2087 / MED4</strain>
    </source>
</reference>